<feature type="chain" id="PRO_0000392914" description="Putative zinc metalloprotease Rip3">
    <location>
        <begin position="1"/>
        <end position="393"/>
    </location>
</feature>
<feature type="transmembrane region" description="Helical" evidence="2">
    <location>
        <begin position="10"/>
        <end position="30"/>
    </location>
</feature>
<feature type="transmembrane region" description="Helical" evidence="2">
    <location>
        <begin position="45"/>
        <end position="65"/>
    </location>
</feature>
<feature type="transmembrane region" description="Helical" evidence="2">
    <location>
        <begin position="77"/>
        <end position="97"/>
    </location>
</feature>
<feature type="transmembrane region" description="Helical" evidence="2">
    <location>
        <begin position="108"/>
        <end position="128"/>
    </location>
</feature>
<feature type="transmembrane region" description="Helical" evidence="2">
    <location>
        <begin position="136"/>
        <end position="156"/>
    </location>
</feature>
<feature type="transmembrane region" description="Helical" evidence="2">
    <location>
        <begin position="207"/>
        <end position="227"/>
    </location>
</feature>
<feature type="domain" description="CBS 1" evidence="3">
    <location>
        <begin position="251"/>
        <end position="308"/>
    </location>
</feature>
<feature type="domain" description="CBS 2" evidence="3">
    <location>
        <begin position="315"/>
        <end position="376"/>
    </location>
</feature>
<feature type="active site" evidence="4">
    <location>
        <position position="67"/>
    </location>
</feature>
<feature type="binding site" evidence="4">
    <location>
        <position position="66"/>
    </location>
    <ligand>
        <name>Zn(2+)</name>
        <dbReference type="ChEBI" id="CHEBI:29105"/>
        <note>catalytic</note>
    </ligand>
</feature>
<feature type="binding site" evidence="4">
    <location>
        <position position="70"/>
    </location>
    <ligand>
        <name>Zn(2+)</name>
        <dbReference type="ChEBI" id="CHEBI:29105"/>
        <note>catalytic</note>
    </ligand>
</feature>
<keyword id="KW-0129">CBS domain</keyword>
<keyword id="KW-1003">Cell membrane</keyword>
<keyword id="KW-0378">Hydrolase</keyword>
<keyword id="KW-0472">Membrane</keyword>
<keyword id="KW-0479">Metal-binding</keyword>
<keyword id="KW-0482">Metalloprotease</keyword>
<keyword id="KW-0645">Protease</keyword>
<keyword id="KW-1185">Reference proteome</keyword>
<keyword id="KW-0677">Repeat</keyword>
<keyword id="KW-0812">Transmembrane</keyword>
<keyword id="KW-1133">Transmembrane helix</keyword>
<keyword id="KW-0862">Zinc</keyword>
<dbReference type="EMBL" id="AL123456">
    <property type="protein sequence ID" value="CCP45423.1"/>
    <property type="molecule type" value="Genomic_DNA"/>
</dbReference>
<dbReference type="PIR" id="H70572">
    <property type="entry name" value="H70572"/>
</dbReference>
<dbReference type="RefSeq" id="NP_217141.1">
    <property type="nucleotide sequence ID" value="NC_000962.3"/>
</dbReference>
<dbReference type="RefSeq" id="WP_003899401.1">
    <property type="nucleotide sequence ID" value="NZ_NVQJ01000075.1"/>
</dbReference>
<dbReference type="SMR" id="P9WHR1"/>
<dbReference type="STRING" id="83332.Rv2625c"/>
<dbReference type="PaxDb" id="83332-Rv2625c"/>
<dbReference type="DNASU" id="887692"/>
<dbReference type="GeneID" id="887692"/>
<dbReference type="KEGG" id="mtu:Rv2625c"/>
<dbReference type="KEGG" id="mtv:RVBD_2625c"/>
<dbReference type="TubercuList" id="Rv2625c"/>
<dbReference type="eggNOG" id="COG0517">
    <property type="taxonomic scope" value="Bacteria"/>
</dbReference>
<dbReference type="eggNOG" id="COG1994">
    <property type="taxonomic scope" value="Bacteria"/>
</dbReference>
<dbReference type="InParanoid" id="P9WHR1"/>
<dbReference type="OrthoDB" id="9781963at2"/>
<dbReference type="PhylomeDB" id="P9WHR1"/>
<dbReference type="Proteomes" id="UP000001584">
    <property type="component" value="Chromosome"/>
</dbReference>
<dbReference type="GO" id="GO:0009274">
    <property type="term" value="C:peptidoglycan-based cell wall"/>
    <property type="evidence" value="ECO:0007005"/>
    <property type="project" value="MTBBASE"/>
</dbReference>
<dbReference type="GO" id="GO:0005886">
    <property type="term" value="C:plasma membrane"/>
    <property type="evidence" value="ECO:0007005"/>
    <property type="project" value="MTBBASE"/>
</dbReference>
<dbReference type="GO" id="GO:0046872">
    <property type="term" value="F:metal ion binding"/>
    <property type="evidence" value="ECO:0007669"/>
    <property type="project" value="UniProtKB-KW"/>
</dbReference>
<dbReference type="GO" id="GO:0008237">
    <property type="term" value="F:metallopeptidase activity"/>
    <property type="evidence" value="ECO:0007669"/>
    <property type="project" value="UniProtKB-KW"/>
</dbReference>
<dbReference type="GO" id="GO:0006508">
    <property type="term" value="P:proteolysis"/>
    <property type="evidence" value="ECO:0007669"/>
    <property type="project" value="UniProtKB-KW"/>
</dbReference>
<dbReference type="CDD" id="cd06164">
    <property type="entry name" value="S2P-M50_SpoIVFB_CBS"/>
    <property type="match status" value="1"/>
</dbReference>
<dbReference type="Gene3D" id="3.10.580.10">
    <property type="entry name" value="CBS-domain"/>
    <property type="match status" value="1"/>
</dbReference>
<dbReference type="InterPro" id="IPR000644">
    <property type="entry name" value="CBS_dom"/>
</dbReference>
<dbReference type="InterPro" id="IPR046342">
    <property type="entry name" value="CBS_dom_sf"/>
</dbReference>
<dbReference type="InterPro" id="IPR008915">
    <property type="entry name" value="Peptidase_M50"/>
</dbReference>
<dbReference type="InterPro" id="IPR016483">
    <property type="entry name" value="UCP006404_Pept_M50_CBS"/>
</dbReference>
<dbReference type="PANTHER" id="PTHR39188">
    <property type="entry name" value="MEMBRANE-ASSOCIATED ZINC METALLOPROTEASE M50B"/>
    <property type="match status" value="1"/>
</dbReference>
<dbReference type="PANTHER" id="PTHR39188:SF3">
    <property type="entry name" value="STAGE IV SPORULATION PROTEIN FB"/>
    <property type="match status" value="1"/>
</dbReference>
<dbReference type="Pfam" id="PF00571">
    <property type="entry name" value="CBS"/>
    <property type="match status" value="1"/>
</dbReference>
<dbReference type="Pfam" id="PF02163">
    <property type="entry name" value="Peptidase_M50"/>
    <property type="match status" value="2"/>
</dbReference>
<dbReference type="PIRSF" id="PIRSF006404">
    <property type="entry name" value="UCP006404_Pept_M50_CBS"/>
    <property type="match status" value="1"/>
</dbReference>
<dbReference type="SUPFAM" id="SSF54631">
    <property type="entry name" value="CBS-domain pair"/>
    <property type="match status" value="1"/>
</dbReference>
<dbReference type="PROSITE" id="PS51371">
    <property type="entry name" value="CBS"/>
    <property type="match status" value="2"/>
</dbReference>
<dbReference type="PROSITE" id="PS00142">
    <property type="entry name" value="ZINC_PROTEASE"/>
    <property type="match status" value="1"/>
</dbReference>
<comment type="cofactor">
    <cofactor evidence="1">
        <name>Zn(2+)</name>
        <dbReference type="ChEBI" id="CHEBI:29105"/>
    </cofactor>
    <text evidence="1">Binds 1 zinc ion per subunit.</text>
</comment>
<comment type="subcellular location">
    <subcellularLocation>
        <location evidence="8">Cell membrane</location>
        <topology evidence="8">Multi-pass membrane protein</topology>
    </subcellularLocation>
</comment>
<comment type="induction">
    <text evidence="5 6 7">A member of the dormancy regulon. Induced in response to reduced oxygen tension (hypoxia), low levels of nitric oxide (NO) and carbon monoxide (CO). It is hoped that this regulon will give insight into the latent, or dormant phase of infection.</text>
</comment>
<comment type="similarity">
    <text evidence="8">Belongs to the peptidase M50B family.</text>
</comment>
<name>RIP3_MYCTU</name>
<accession>P9WHR1</accession>
<accession>L0TCX6</accession>
<accession>O06187</accession>
<accession>Q7D6V5</accession>
<evidence type="ECO:0000250" key="1"/>
<evidence type="ECO:0000255" key="2"/>
<evidence type="ECO:0000255" key="3">
    <source>
        <dbReference type="PROSITE-ProRule" id="PRU00703"/>
    </source>
</evidence>
<evidence type="ECO:0000255" key="4">
    <source>
        <dbReference type="PROSITE-ProRule" id="PRU10095"/>
    </source>
</evidence>
<evidence type="ECO:0000269" key="5">
    <source>
    </source>
</evidence>
<evidence type="ECO:0000269" key="6">
    <source>
    </source>
</evidence>
<evidence type="ECO:0000269" key="7">
    <source>
    </source>
</evidence>
<evidence type="ECO:0000305" key="8"/>
<gene>
    <name type="primary">rip3</name>
    <name type="ordered locus">Rv2625c</name>
</gene>
<reference key="1">
    <citation type="journal article" date="1998" name="Nature">
        <title>Deciphering the biology of Mycobacterium tuberculosis from the complete genome sequence.</title>
        <authorList>
            <person name="Cole S.T."/>
            <person name="Brosch R."/>
            <person name="Parkhill J."/>
            <person name="Garnier T."/>
            <person name="Churcher C.M."/>
            <person name="Harris D.E."/>
            <person name="Gordon S.V."/>
            <person name="Eiglmeier K."/>
            <person name="Gas S."/>
            <person name="Barry C.E. III"/>
            <person name="Tekaia F."/>
            <person name="Badcock K."/>
            <person name="Basham D."/>
            <person name="Brown D."/>
            <person name="Chillingworth T."/>
            <person name="Connor R."/>
            <person name="Davies R.M."/>
            <person name="Devlin K."/>
            <person name="Feltwell T."/>
            <person name="Gentles S."/>
            <person name="Hamlin N."/>
            <person name="Holroyd S."/>
            <person name="Hornsby T."/>
            <person name="Jagels K."/>
            <person name="Krogh A."/>
            <person name="McLean J."/>
            <person name="Moule S."/>
            <person name="Murphy L.D."/>
            <person name="Oliver S."/>
            <person name="Osborne J."/>
            <person name="Quail M.A."/>
            <person name="Rajandream M.A."/>
            <person name="Rogers J."/>
            <person name="Rutter S."/>
            <person name="Seeger K."/>
            <person name="Skelton S."/>
            <person name="Squares S."/>
            <person name="Squares R."/>
            <person name="Sulston J.E."/>
            <person name="Taylor K."/>
            <person name="Whitehead S."/>
            <person name="Barrell B.G."/>
        </authorList>
    </citation>
    <scope>NUCLEOTIDE SEQUENCE [LARGE SCALE GENOMIC DNA]</scope>
    <source>
        <strain>ATCC 25618 / H37Rv</strain>
    </source>
</reference>
<reference key="2">
    <citation type="journal article" date="2001" name="Proc. Natl. Acad. Sci. U.S.A.">
        <title>Regulation of the Mycobacterium tuberculosis hypoxic response gene encoding alpha -crystallin.</title>
        <authorList>
            <person name="Sherman D.R."/>
            <person name="Voskuil M."/>
            <person name="Schnappinger D."/>
            <person name="Liao R."/>
            <person name="Harrell M.I."/>
            <person name="Schoolnik G.K."/>
        </authorList>
    </citation>
    <scope>INDUCTION BY HYPOXIA</scope>
    <source>
        <strain>ATCC 25618 / H37Rv</strain>
    </source>
</reference>
<reference key="3">
    <citation type="journal article" date="2003" name="J. Exp. Med.">
        <title>Inhibition of respiration by nitric oxide induces a Mycobacterium tuberculosis dormancy program.</title>
        <authorList>
            <person name="Voskuil M.I."/>
            <person name="Schnappinger D."/>
            <person name="Visconti K.C."/>
            <person name="Harrell M.I."/>
            <person name="Dolganov G.M."/>
            <person name="Sherman D.R."/>
            <person name="Schoolnik G.K."/>
        </authorList>
    </citation>
    <scope>INDUCTION BY NITRIC OXIDE (NO) AND BY HYPOXIA</scope>
    <scope>DORMANCY REGULON</scope>
    <source>
        <strain>ATCC 25618 / H37Rv</strain>
    </source>
</reference>
<reference key="4">
    <citation type="journal article" date="2008" name="J. Biol. Chem.">
        <title>Heme oxygenase-1-derived carbon monoxide induces the Mycobacterium tuberculosis dormancy regulon.</title>
        <authorList>
            <person name="Kumar A."/>
            <person name="Deshane J.S."/>
            <person name="Crossman D.K."/>
            <person name="Bolisetty S."/>
            <person name="Yan B.S."/>
            <person name="Kramnik I."/>
            <person name="Agarwal A."/>
            <person name="Steyn A.J."/>
        </authorList>
    </citation>
    <scope>INDUCTION BY CARBON MONOXIDE (CO)</scope>
    <scope>DORMANCY REGULON</scope>
    <source>
        <strain>ATCC 25618 / H37Rv</strain>
    </source>
</reference>
<reference key="5">
    <citation type="journal article" date="2011" name="Mol. Cell. Proteomics">
        <title>Proteogenomic analysis of Mycobacterium tuberculosis by high resolution mass spectrometry.</title>
        <authorList>
            <person name="Kelkar D.S."/>
            <person name="Kumar D."/>
            <person name="Kumar P."/>
            <person name="Balakrishnan L."/>
            <person name="Muthusamy B."/>
            <person name="Yadav A.K."/>
            <person name="Shrivastava P."/>
            <person name="Marimuthu A."/>
            <person name="Anand S."/>
            <person name="Sundaram H."/>
            <person name="Kingsbury R."/>
            <person name="Harsha H.C."/>
            <person name="Nair B."/>
            <person name="Prasad T.S."/>
            <person name="Chauhan D.S."/>
            <person name="Katoch K."/>
            <person name="Katoch V.M."/>
            <person name="Kumar P."/>
            <person name="Chaerkady R."/>
            <person name="Ramachandran S."/>
            <person name="Dash D."/>
            <person name="Pandey A."/>
        </authorList>
    </citation>
    <scope>IDENTIFICATION BY MASS SPECTROMETRY [LARGE SCALE ANALYSIS]</scope>
    <source>
        <strain>ATCC 25618 / H37Rv</strain>
    </source>
</reference>
<protein>
    <recommendedName>
        <fullName>Putative zinc metalloprotease Rip3</fullName>
    </recommendedName>
</protein>
<organism>
    <name type="scientific">Mycobacterium tuberculosis (strain ATCC 25618 / H37Rv)</name>
    <dbReference type="NCBI Taxonomy" id="83332"/>
    <lineage>
        <taxon>Bacteria</taxon>
        <taxon>Bacillati</taxon>
        <taxon>Actinomycetota</taxon>
        <taxon>Actinomycetes</taxon>
        <taxon>Mycobacteriales</taxon>
        <taxon>Mycobacteriaceae</taxon>
        <taxon>Mycobacterium</taxon>
        <taxon>Mycobacterium tuberculosis complex</taxon>
    </lineage>
</organism>
<sequence>MRDAIPLGRIAGFVVNVHWSVLVILWLFTWSLATMLPGTVGGYPAVVYWLLGAGGAVMLLASLLAHELAHAVVARRAGVSVESVTLWLFGGVTALGGEAKTPKAAFRIAFAGPATSLALSATFGALAITLAGVRTPAIVISVAWWLATVNLLLGLFNLLPGAPLDGGRLVRAYLWRRHGDSVRAGIGAARAGRVVALVLIALGLAEFVAGGLVGGVWLAFIGWFIFAAAREEETRISTQQLFAGVRVADAMTAQPHTAPGWINVEDFIQRYVLGERHSAYPVADRDGSITGLVALRQLRDVAPSRRSTTSVGDIALPLHSVPTARPQEPLTALLERMAPLGPRSRALVTEGSAVVGIVTPSDVARLIDVYRLAQPEPTFTTSPQDADRFSDAG</sequence>
<proteinExistence type="evidence at protein level"/>